<evidence type="ECO:0000250" key="1"/>
<evidence type="ECO:0000250" key="2">
    <source>
        <dbReference type="UniProtKB" id="P39462"/>
    </source>
</evidence>
<evidence type="ECO:0000250" key="3">
    <source>
        <dbReference type="UniProtKB" id="Q975C8"/>
    </source>
</evidence>
<evidence type="ECO:0000255" key="4"/>
<evidence type="ECO:0000269" key="5">
    <source>
    </source>
</evidence>
<evidence type="ECO:0000303" key="6">
    <source>
    </source>
</evidence>
<evidence type="ECO:0000305" key="7"/>
<evidence type="ECO:0000312" key="8">
    <source>
        <dbReference type="EMBL" id="ABP95584.1"/>
    </source>
</evidence>
<dbReference type="EC" id="1.3.1.84"/>
<dbReference type="EMBL" id="CP000682">
    <property type="protein sequence ID" value="ABP95584.1"/>
    <property type="molecule type" value="Genomic_DNA"/>
</dbReference>
<dbReference type="RefSeq" id="WP_012021371.1">
    <property type="nucleotide sequence ID" value="NC_009440.1"/>
</dbReference>
<dbReference type="SMR" id="A4YGN2"/>
<dbReference type="STRING" id="399549.Msed_1426"/>
<dbReference type="GeneID" id="91755927"/>
<dbReference type="KEGG" id="mse:Msed_1426"/>
<dbReference type="eggNOG" id="arCOG01455">
    <property type="taxonomic scope" value="Archaea"/>
</dbReference>
<dbReference type="HOGENOM" id="CLU_026673_11_0_2"/>
<dbReference type="BRENDA" id="1.3.1.84">
    <property type="organism ID" value="7245"/>
</dbReference>
<dbReference type="Proteomes" id="UP000000242">
    <property type="component" value="Chromosome"/>
</dbReference>
<dbReference type="GO" id="GO:0005737">
    <property type="term" value="C:cytoplasm"/>
    <property type="evidence" value="ECO:0007669"/>
    <property type="project" value="TreeGrafter"/>
</dbReference>
<dbReference type="GO" id="GO:0043958">
    <property type="term" value="F:acryloyl-CoA reductase (NADH) activity"/>
    <property type="evidence" value="ECO:0000314"/>
    <property type="project" value="UniProtKB"/>
</dbReference>
<dbReference type="GO" id="GO:0043957">
    <property type="term" value="F:acryloyl-CoA reductase (NADPH) activity"/>
    <property type="evidence" value="ECO:0007669"/>
    <property type="project" value="UniProtKB-EC"/>
</dbReference>
<dbReference type="GO" id="GO:0004022">
    <property type="term" value="F:alcohol dehydrogenase (NAD+) activity"/>
    <property type="evidence" value="ECO:0007669"/>
    <property type="project" value="TreeGrafter"/>
</dbReference>
<dbReference type="GO" id="GO:0008270">
    <property type="term" value="F:zinc ion binding"/>
    <property type="evidence" value="ECO:0007669"/>
    <property type="project" value="InterPro"/>
</dbReference>
<dbReference type="CDD" id="cd08259">
    <property type="entry name" value="Zn_ADH5"/>
    <property type="match status" value="1"/>
</dbReference>
<dbReference type="FunFam" id="3.90.180.10:FF:000109">
    <property type="entry name" value="Acryloyl-coenzyme A reductase"/>
    <property type="match status" value="1"/>
</dbReference>
<dbReference type="Gene3D" id="3.90.180.10">
    <property type="entry name" value="Medium-chain alcohol dehydrogenases, catalytic domain"/>
    <property type="match status" value="1"/>
</dbReference>
<dbReference type="InterPro" id="IPR053496">
    <property type="entry name" value="Acryloyl-CoA_Reductase_Zn-ADH"/>
</dbReference>
<dbReference type="InterPro" id="IPR013149">
    <property type="entry name" value="ADH-like_C"/>
</dbReference>
<dbReference type="InterPro" id="IPR013154">
    <property type="entry name" value="ADH-like_N"/>
</dbReference>
<dbReference type="InterPro" id="IPR002328">
    <property type="entry name" value="ADH_Zn_CS"/>
</dbReference>
<dbReference type="InterPro" id="IPR011032">
    <property type="entry name" value="GroES-like_sf"/>
</dbReference>
<dbReference type="InterPro" id="IPR036291">
    <property type="entry name" value="NAD(P)-bd_dom_sf"/>
</dbReference>
<dbReference type="InterPro" id="IPR020843">
    <property type="entry name" value="PKS_ER"/>
</dbReference>
<dbReference type="InterPro" id="IPR002364">
    <property type="entry name" value="Quin_OxRdtase/zeta-crystal_CS"/>
</dbReference>
<dbReference type="NCBIfam" id="NF041172">
    <property type="entry name" value="AcrlCoa_red_Thmprot"/>
    <property type="match status" value="1"/>
</dbReference>
<dbReference type="NCBIfam" id="NF010344">
    <property type="entry name" value="PRK13771.1"/>
    <property type="match status" value="1"/>
</dbReference>
<dbReference type="PANTHER" id="PTHR42940">
    <property type="entry name" value="ALCOHOL DEHYDROGENASE 1-RELATED"/>
    <property type="match status" value="1"/>
</dbReference>
<dbReference type="PANTHER" id="PTHR42940:SF8">
    <property type="entry name" value="VACUOLAR PROTEIN SORTING-ASSOCIATED PROTEIN 11"/>
    <property type="match status" value="1"/>
</dbReference>
<dbReference type="Pfam" id="PF08240">
    <property type="entry name" value="ADH_N"/>
    <property type="match status" value="1"/>
</dbReference>
<dbReference type="Pfam" id="PF00107">
    <property type="entry name" value="ADH_zinc_N"/>
    <property type="match status" value="1"/>
</dbReference>
<dbReference type="SMART" id="SM00829">
    <property type="entry name" value="PKS_ER"/>
    <property type="match status" value="1"/>
</dbReference>
<dbReference type="SUPFAM" id="SSF50129">
    <property type="entry name" value="GroES-like"/>
    <property type="match status" value="1"/>
</dbReference>
<dbReference type="SUPFAM" id="SSF51735">
    <property type="entry name" value="NAD(P)-binding Rossmann-fold domains"/>
    <property type="match status" value="1"/>
</dbReference>
<dbReference type="PROSITE" id="PS00059">
    <property type="entry name" value="ADH_ZINC"/>
    <property type="match status" value="1"/>
</dbReference>
<dbReference type="PROSITE" id="PS01162">
    <property type="entry name" value="QOR_ZETA_CRYSTAL"/>
    <property type="match status" value="1"/>
</dbReference>
<feature type="chain" id="PRO_0000404648" description="Acryloyl-coenzyme A reductase">
    <location>
        <begin position="1"/>
        <end position="332"/>
    </location>
</feature>
<feature type="binding site" evidence="2">
    <location>
        <position position="38"/>
    </location>
    <ligand>
        <name>Zn(2+)</name>
        <dbReference type="ChEBI" id="CHEBI:29105"/>
        <label>1</label>
        <note>catalytic</note>
    </ligand>
</feature>
<feature type="binding site" evidence="1">
    <location>
        <position position="39"/>
    </location>
    <ligand>
        <name>NADP(+)</name>
        <dbReference type="ChEBI" id="CHEBI:58349"/>
    </ligand>
</feature>
<feature type="binding site" evidence="2">
    <location>
        <position position="60"/>
    </location>
    <ligand>
        <name>Zn(2+)</name>
        <dbReference type="ChEBI" id="CHEBI:29105"/>
        <label>1</label>
        <note>catalytic</note>
    </ligand>
</feature>
<feature type="binding site" evidence="2">
    <location>
        <position position="90"/>
    </location>
    <ligand>
        <name>Zn(2+)</name>
        <dbReference type="ChEBI" id="CHEBI:29105"/>
        <label>2</label>
    </ligand>
</feature>
<feature type="binding site" evidence="2">
    <location>
        <position position="93"/>
    </location>
    <ligand>
        <name>Zn(2+)</name>
        <dbReference type="ChEBI" id="CHEBI:29105"/>
        <label>2</label>
    </ligand>
</feature>
<feature type="binding site" evidence="2">
    <location>
        <position position="96"/>
    </location>
    <ligand>
        <name>Zn(2+)</name>
        <dbReference type="ChEBI" id="CHEBI:29105"/>
        <label>2</label>
    </ligand>
</feature>
<feature type="binding site" evidence="2">
    <location>
        <position position="104"/>
    </location>
    <ligand>
        <name>Zn(2+)</name>
        <dbReference type="ChEBI" id="CHEBI:29105"/>
        <label>2</label>
    </ligand>
</feature>
<feature type="binding site" evidence="2">
    <location>
        <position position="146"/>
    </location>
    <ligand>
        <name>Zn(2+)</name>
        <dbReference type="ChEBI" id="CHEBI:29105"/>
        <label>1</label>
        <note>catalytic</note>
    </ligand>
</feature>
<feature type="binding site" evidence="1">
    <location>
        <begin position="172"/>
        <end position="175"/>
    </location>
    <ligand>
        <name>NADP(+)</name>
        <dbReference type="ChEBI" id="CHEBI:58349"/>
    </ligand>
</feature>
<feature type="binding site" evidence="1">
    <location>
        <begin position="194"/>
        <end position="196"/>
    </location>
    <ligand>
        <name>NADP(+)</name>
        <dbReference type="ChEBI" id="CHEBI:58349"/>
    </ligand>
</feature>
<name>ACAR_METS5</name>
<organism>
    <name type="scientific">Metallosphaera sedula (strain ATCC 51363 / DSM 5348 / JCM 9185 / NBRC 15509 / TH2)</name>
    <dbReference type="NCBI Taxonomy" id="399549"/>
    <lineage>
        <taxon>Archaea</taxon>
        <taxon>Thermoproteota</taxon>
        <taxon>Thermoprotei</taxon>
        <taxon>Sulfolobales</taxon>
        <taxon>Sulfolobaceae</taxon>
        <taxon>Metallosphaera</taxon>
    </lineage>
</organism>
<keyword id="KW-0479">Metal-binding</keyword>
<keyword id="KW-0521">NADP</keyword>
<keyword id="KW-0560">Oxidoreductase</keyword>
<keyword id="KW-1185">Reference proteome</keyword>
<keyword id="KW-0862">Zinc</keyword>
<gene>
    <name type="ordered locus">Msed_1426</name>
</gene>
<reference evidence="7 8" key="1">
    <citation type="journal article" date="2008" name="Appl. Environ. Microbiol.">
        <title>The genome sequence of the metal-mobilizing, extremely thermoacidophilic archaeon Metallosphaera sedula provides insights into bioleaching-associated metabolism.</title>
        <authorList>
            <person name="Auernik K.S."/>
            <person name="Maezato Y."/>
            <person name="Blum P.H."/>
            <person name="Kelly R.M."/>
        </authorList>
    </citation>
    <scope>NUCLEOTIDE SEQUENCE [LARGE SCALE GENOMIC DNA]</scope>
    <source>
        <strain>ATCC 51363 / DSM 5348 / JCM 9185 / NBRC 15509 / TH2</strain>
    </source>
</reference>
<reference evidence="7" key="2">
    <citation type="journal article" date="2009" name="J. Bacteriol.">
        <title>3-hydroxypropionyl-coenzyme A dehydratase and acryloyl-coenzyme A reductase, enzymes of the autotrophic 3-hydroxypropionate/4-hydroxybutyrate cycle in the Sulfolobales.</title>
        <authorList>
            <person name="Teufel R."/>
            <person name="Kung J.W."/>
            <person name="Kockelkorn D."/>
            <person name="Alber B.E."/>
            <person name="Fuchs G."/>
        </authorList>
    </citation>
    <scope>IDENTIFICATION BY MASS SPECTROMETRY</scope>
    <scope>FUNCTION</scope>
    <scope>CATALYTIC ACTIVITY</scope>
    <source>
        <strain>ATCC 51363 / DSM 5348 / JCM 9185 / NBRC 15509 / TH2</strain>
    </source>
</reference>
<accession>A4YGN2</accession>
<comment type="function">
    <text evidence="3 5">Plays a role in autotrophic carbon fixation via the 3-hydroxypropionate/4-hydroxybutyrate cycle. Catalyzes the acryloyl-CoA dependent NADPH oxidation and formation of propionyl-CoA.</text>
</comment>
<comment type="catalytic activity">
    <reaction evidence="5">
        <text>propanoyl-CoA + NADP(+) = acryloyl-CoA + NADPH + H(+)</text>
        <dbReference type="Rhea" id="RHEA:26454"/>
        <dbReference type="ChEBI" id="CHEBI:15378"/>
        <dbReference type="ChEBI" id="CHEBI:57367"/>
        <dbReference type="ChEBI" id="CHEBI:57392"/>
        <dbReference type="ChEBI" id="CHEBI:57783"/>
        <dbReference type="ChEBI" id="CHEBI:58349"/>
        <dbReference type="EC" id="1.3.1.84"/>
    </reaction>
</comment>
<comment type="cofactor">
    <cofactor evidence="3">
        <name>Zn(2+)</name>
        <dbReference type="ChEBI" id="CHEBI:29105"/>
    </cofactor>
</comment>
<comment type="subunit">
    <text evidence="3">Monomer.</text>
</comment>
<comment type="similarity">
    <text evidence="4">Belongs to the zinc-containing alcohol dehydrogenase family.</text>
</comment>
<protein>
    <recommendedName>
        <fullName evidence="6">Acryloyl-coenzyme A reductase</fullName>
        <shortName evidence="6">Acryloyl-CoA reductase</shortName>
        <ecNumber>1.3.1.84</ecNumber>
    </recommendedName>
</protein>
<proteinExistence type="evidence at protein level"/>
<sequence>MKAVVVKGHKQGYEVREVQDPKPASGEVIIKVRRAALCYRDLLQLQGFYPRMKYPVVLGHEVVGEILEVGEGVTGFSPGDRVISLLYAPDGTCHYCRQGEEAYCHSRLGYSEELDGFFSEMAKVKVTSLVKVPTRASDEGAVMVPCVTGMVYRGLRRANLREGETVLVTGASGGVGIHALQVAKAMGARVVGVTTSEEKASIVGKYADRVIVGSKFSEEAKKEDINVVIDTVGTPTFDESLKSLWMGGRIVQIGNVDPTQSYQLRLGYTILKDIAIIGHASATRRDAEGALKLTAEGKIRPVVAGTVHLEEIDKGYEMLKDKHKVGKVLLTT</sequence>